<gene>
    <name type="ordered locus">MIMI_L552</name>
</gene>
<feature type="chain" id="PRO_0000253279" description="Uncharacterized protein L552">
    <location>
        <begin position="1"/>
        <end position="308"/>
    </location>
</feature>
<accession>Q5UR36</accession>
<proteinExistence type="predicted"/>
<reference key="1">
    <citation type="journal article" date="2004" name="Science">
        <title>The 1.2-megabase genome sequence of Mimivirus.</title>
        <authorList>
            <person name="Raoult D."/>
            <person name="Audic S."/>
            <person name="Robert C."/>
            <person name="Abergel C."/>
            <person name="Renesto P."/>
            <person name="Ogata H."/>
            <person name="La Scola B."/>
            <person name="Susan M."/>
            <person name="Claverie J.-M."/>
        </authorList>
    </citation>
    <scope>NUCLEOTIDE SEQUENCE [LARGE SCALE GENOMIC DNA]</scope>
    <source>
        <strain>Rowbotham-Bradford</strain>
    </source>
</reference>
<dbReference type="EMBL" id="AY653733">
    <property type="protein sequence ID" value="AAV50816.1"/>
    <property type="molecule type" value="Genomic_DNA"/>
</dbReference>
<dbReference type="SMR" id="Q5UR36"/>
<dbReference type="KEGG" id="vg:9925187"/>
<dbReference type="OrthoDB" id="11584at10239"/>
<dbReference type="Proteomes" id="UP000001134">
    <property type="component" value="Genome"/>
</dbReference>
<organismHost>
    <name type="scientific">Acanthamoeba polyphaga</name>
    <name type="common">Amoeba</name>
    <dbReference type="NCBI Taxonomy" id="5757"/>
</organismHost>
<sequence>MIISISLMDNIKSKVKHIYEIFFNKRLVETKKISLIEVYGESQNKSIKNPVQNSDSDNSIMLTPLSSKIYHASSPRSKPHVLRGLFEDDEYILSSETDEDNIDPDYQEKMENNGLGFFMEDFICAYGVCPVCGEKSLRKFSHSNVPVIDLVCINKKHHLKKKKCFVFQIKISLNTNYFSLKNQIISVGSKKYGNICHLRKGSDPLLHKIIVPGYICIKLSRSSSTSQEYIIDHKNSFVLIPNYSDESSDLYYQYLDYTSMYGKDLVTWNINMVETKNLDYVLSNNKIIHEIFLEKTIDNPYKDLVKLI</sequence>
<name>YL552_MIMIV</name>
<protein>
    <recommendedName>
        <fullName>Uncharacterized protein L552</fullName>
    </recommendedName>
</protein>
<keyword id="KW-1185">Reference proteome</keyword>
<organism>
    <name type="scientific">Acanthamoeba polyphaga mimivirus</name>
    <name type="common">APMV</name>
    <dbReference type="NCBI Taxonomy" id="212035"/>
    <lineage>
        <taxon>Viruses</taxon>
        <taxon>Varidnaviria</taxon>
        <taxon>Bamfordvirae</taxon>
        <taxon>Nucleocytoviricota</taxon>
        <taxon>Megaviricetes</taxon>
        <taxon>Imitervirales</taxon>
        <taxon>Mimiviridae</taxon>
        <taxon>Megamimivirinae</taxon>
        <taxon>Mimivirus</taxon>
        <taxon>Mimivirus bradfordmassiliense</taxon>
    </lineage>
</organism>